<proteinExistence type="inferred from homology"/>
<reference key="1">
    <citation type="submission" date="2006-12" db="EMBL/GenBank/DDBJ databases">
        <title>Complete sequence of Chlorobium phaeobacteroides DSM 266.</title>
        <authorList>
            <consortium name="US DOE Joint Genome Institute"/>
            <person name="Copeland A."/>
            <person name="Lucas S."/>
            <person name="Lapidus A."/>
            <person name="Barry K."/>
            <person name="Detter J.C."/>
            <person name="Glavina del Rio T."/>
            <person name="Hammon N."/>
            <person name="Israni S."/>
            <person name="Pitluck S."/>
            <person name="Goltsman E."/>
            <person name="Schmutz J."/>
            <person name="Larimer F."/>
            <person name="Land M."/>
            <person name="Hauser L."/>
            <person name="Mikhailova N."/>
            <person name="Li T."/>
            <person name="Overmann J."/>
            <person name="Bryant D.A."/>
            <person name="Richardson P."/>
        </authorList>
    </citation>
    <scope>NUCLEOTIDE SEQUENCE [LARGE SCALE GENOMIC DNA]</scope>
    <source>
        <strain>DSM 266 / SMG 266 / 2430</strain>
    </source>
</reference>
<sequence>MLHVKRTLVTTALPYANGPVHLGHLAGVYLPADLYVRYKRLKGDNIIHIGGSDEHGVPITLTAEKEGISPRDVVDRYHGMNLDAFTKCGISFNYYGRTTSAVHHATAREFFSEIENKGMFTRKTEKQFFDKKANRFLSDRYITGTCPICSNPDANGDQCEQCGTHLSPLELINPKSKLSDATPELRETLHWYFPLGRFQSELESYVQSHDKEWRPNVINYTRTWLKQGLNDRAITRDLSWGIKLPLETPEASGKVLYVWFDAVLGYISFTKEWAAQSGQPELWREYWQDPECRMINFIGKDNVVFHTLMFPAILMAWNKGRKTDLYNLADNVPASEFMNFEGRKFSKSRNYAVYLGDFLEKFPADTLRYCIAMNYPENKDSDFSWLDFQNRTNGELADTLGNFIKRSIDFTNSRFDGKVPCECTPEEWKIPGIDWKETLEKLDQAFEAFHFREATSLGMDIARTANRFLTESEPWKVIKSDREGAAKTMAISLNLCYALALVLYPVIPETANRILAMLGVEKSIDDQLDSGKSCIAQILTPQLEKGHQLRKHSEILFTKIEDAELAPELKKIEDLLALTEEREAKNEAKAMDFSPLISFDEFLKVDLRVATVLDCQKIKKAGKLLKLQLKVGSETRQVLAGIAKHYSPEEMIGKNVILVANLAERTILNEISQGMILAVEGTDGKLFLVEPSGKEINGKKIQ</sequence>
<feature type="chain" id="PRO_0000331802" description="Methionine--tRNA ligase">
    <location>
        <begin position="1"/>
        <end position="702"/>
    </location>
</feature>
<feature type="domain" description="tRNA-binding" evidence="1">
    <location>
        <begin position="601"/>
        <end position="702"/>
    </location>
</feature>
<feature type="short sequence motif" description="'HIGH' region">
    <location>
        <begin position="14"/>
        <end position="24"/>
    </location>
</feature>
<feature type="short sequence motif" description="'KMSKS' region">
    <location>
        <begin position="344"/>
        <end position="348"/>
    </location>
</feature>
<feature type="binding site" evidence="1">
    <location>
        <position position="146"/>
    </location>
    <ligand>
        <name>Zn(2+)</name>
        <dbReference type="ChEBI" id="CHEBI:29105"/>
    </ligand>
</feature>
<feature type="binding site" evidence="1">
    <location>
        <position position="149"/>
    </location>
    <ligand>
        <name>Zn(2+)</name>
        <dbReference type="ChEBI" id="CHEBI:29105"/>
    </ligand>
</feature>
<feature type="binding site" evidence="1">
    <location>
        <position position="159"/>
    </location>
    <ligand>
        <name>Zn(2+)</name>
        <dbReference type="ChEBI" id="CHEBI:29105"/>
    </ligand>
</feature>
<feature type="binding site" evidence="1">
    <location>
        <position position="162"/>
    </location>
    <ligand>
        <name>Zn(2+)</name>
        <dbReference type="ChEBI" id="CHEBI:29105"/>
    </ligand>
</feature>
<feature type="binding site" evidence="1">
    <location>
        <position position="347"/>
    </location>
    <ligand>
        <name>ATP</name>
        <dbReference type="ChEBI" id="CHEBI:30616"/>
    </ligand>
</feature>
<name>SYM_CHLPD</name>
<gene>
    <name evidence="1" type="primary">metG</name>
    <name type="ordered locus">Cpha266_1011</name>
</gene>
<organism>
    <name type="scientific">Chlorobium phaeobacteroides (strain DSM 266 / SMG 266 / 2430)</name>
    <dbReference type="NCBI Taxonomy" id="290317"/>
    <lineage>
        <taxon>Bacteria</taxon>
        <taxon>Pseudomonadati</taxon>
        <taxon>Chlorobiota</taxon>
        <taxon>Chlorobiia</taxon>
        <taxon>Chlorobiales</taxon>
        <taxon>Chlorobiaceae</taxon>
        <taxon>Chlorobium/Pelodictyon group</taxon>
        <taxon>Chlorobium</taxon>
    </lineage>
</organism>
<accession>A1BF81</accession>
<keyword id="KW-0030">Aminoacyl-tRNA synthetase</keyword>
<keyword id="KW-0067">ATP-binding</keyword>
<keyword id="KW-0963">Cytoplasm</keyword>
<keyword id="KW-0436">Ligase</keyword>
<keyword id="KW-0479">Metal-binding</keyword>
<keyword id="KW-0547">Nucleotide-binding</keyword>
<keyword id="KW-0648">Protein biosynthesis</keyword>
<keyword id="KW-1185">Reference proteome</keyword>
<keyword id="KW-0694">RNA-binding</keyword>
<keyword id="KW-0820">tRNA-binding</keyword>
<keyword id="KW-0862">Zinc</keyword>
<protein>
    <recommendedName>
        <fullName evidence="1">Methionine--tRNA ligase</fullName>
        <ecNumber evidence="1">6.1.1.10</ecNumber>
    </recommendedName>
    <alternativeName>
        <fullName evidence="1">Methionyl-tRNA synthetase</fullName>
        <shortName evidence="1">MetRS</shortName>
    </alternativeName>
</protein>
<evidence type="ECO:0000255" key="1">
    <source>
        <dbReference type="HAMAP-Rule" id="MF_00098"/>
    </source>
</evidence>
<dbReference type="EC" id="6.1.1.10" evidence="1"/>
<dbReference type="EMBL" id="CP000492">
    <property type="protein sequence ID" value="ABL65058.1"/>
    <property type="molecule type" value="Genomic_DNA"/>
</dbReference>
<dbReference type="RefSeq" id="WP_011744885.1">
    <property type="nucleotide sequence ID" value="NC_008639.1"/>
</dbReference>
<dbReference type="SMR" id="A1BF81"/>
<dbReference type="STRING" id="290317.Cpha266_1011"/>
<dbReference type="KEGG" id="cph:Cpha266_1011"/>
<dbReference type="eggNOG" id="COG0073">
    <property type="taxonomic scope" value="Bacteria"/>
</dbReference>
<dbReference type="eggNOG" id="COG0143">
    <property type="taxonomic scope" value="Bacteria"/>
</dbReference>
<dbReference type="HOGENOM" id="CLU_009710_1_2_10"/>
<dbReference type="OrthoDB" id="9810191at2"/>
<dbReference type="Proteomes" id="UP000008701">
    <property type="component" value="Chromosome"/>
</dbReference>
<dbReference type="GO" id="GO:0005829">
    <property type="term" value="C:cytosol"/>
    <property type="evidence" value="ECO:0007669"/>
    <property type="project" value="TreeGrafter"/>
</dbReference>
<dbReference type="GO" id="GO:0005524">
    <property type="term" value="F:ATP binding"/>
    <property type="evidence" value="ECO:0007669"/>
    <property type="project" value="UniProtKB-UniRule"/>
</dbReference>
<dbReference type="GO" id="GO:0046872">
    <property type="term" value="F:metal ion binding"/>
    <property type="evidence" value="ECO:0007669"/>
    <property type="project" value="UniProtKB-KW"/>
</dbReference>
<dbReference type="GO" id="GO:0004825">
    <property type="term" value="F:methionine-tRNA ligase activity"/>
    <property type="evidence" value="ECO:0007669"/>
    <property type="project" value="UniProtKB-UniRule"/>
</dbReference>
<dbReference type="GO" id="GO:0000049">
    <property type="term" value="F:tRNA binding"/>
    <property type="evidence" value="ECO:0007669"/>
    <property type="project" value="UniProtKB-KW"/>
</dbReference>
<dbReference type="GO" id="GO:0006431">
    <property type="term" value="P:methionyl-tRNA aminoacylation"/>
    <property type="evidence" value="ECO:0007669"/>
    <property type="project" value="UniProtKB-UniRule"/>
</dbReference>
<dbReference type="CDD" id="cd07957">
    <property type="entry name" value="Anticodon_Ia_Met"/>
    <property type="match status" value="1"/>
</dbReference>
<dbReference type="CDD" id="cd00814">
    <property type="entry name" value="MetRS_core"/>
    <property type="match status" value="1"/>
</dbReference>
<dbReference type="CDD" id="cd02800">
    <property type="entry name" value="tRNA_bind_EcMetRS_like"/>
    <property type="match status" value="1"/>
</dbReference>
<dbReference type="FunFam" id="2.20.28.20:FF:000001">
    <property type="entry name" value="Methionine--tRNA ligase"/>
    <property type="match status" value="1"/>
</dbReference>
<dbReference type="FunFam" id="2.40.50.140:FF:000042">
    <property type="entry name" value="Methionine--tRNA ligase"/>
    <property type="match status" value="1"/>
</dbReference>
<dbReference type="Gene3D" id="3.40.50.620">
    <property type="entry name" value="HUPs"/>
    <property type="match status" value="1"/>
</dbReference>
<dbReference type="Gene3D" id="1.10.730.10">
    <property type="entry name" value="Isoleucyl-tRNA Synthetase, Domain 1"/>
    <property type="match status" value="1"/>
</dbReference>
<dbReference type="Gene3D" id="2.20.28.20">
    <property type="entry name" value="Methionyl-tRNA synthetase, Zn-domain"/>
    <property type="match status" value="1"/>
</dbReference>
<dbReference type="Gene3D" id="2.40.50.140">
    <property type="entry name" value="Nucleic acid-binding proteins"/>
    <property type="match status" value="1"/>
</dbReference>
<dbReference type="HAMAP" id="MF_00098">
    <property type="entry name" value="Met_tRNA_synth_type1"/>
    <property type="match status" value="1"/>
</dbReference>
<dbReference type="InterPro" id="IPR001412">
    <property type="entry name" value="aa-tRNA-synth_I_CS"/>
</dbReference>
<dbReference type="InterPro" id="IPR041872">
    <property type="entry name" value="Anticodon_Met"/>
</dbReference>
<dbReference type="InterPro" id="IPR004495">
    <property type="entry name" value="Met-tRNA-synth_bsu_C"/>
</dbReference>
<dbReference type="InterPro" id="IPR023458">
    <property type="entry name" value="Met-tRNA_ligase_1"/>
</dbReference>
<dbReference type="InterPro" id="IPR014758">
    <property type="entry name" value="Met-tRNA_synth"/>
</dbReference>
<dbReference type="InterPro" id="IPR015413">
    <property type="entry name" value="Methionyl/Leucyl_tRNA_Synth"/>
</dbReference>
<dbReference type="InterPro" id="IPR033911">
    <property type="entry name" value="MetRS_core"/>
</dbReference>
<dbReference type="InterPro" id="IPR029038">
    <property type="entry name" value="MetRS_Zn"/>
</dbReference>
<dbReference type="InterPro" id="IPR012340">
    <property type="entry name" value="NA-bd_OB-fold"/>
</dbReference>
<dbReference type="InterPro" id="IPR014729">
    <property type="entry name" value="Rossmann-like_a/b/a_fold"/>
</dbReference>
<dbReference type="InterPro" id="IPR002547">
    <property type="entry name" value="tRNA-bd_dom"/>
</dbReference>
<dbReference type="InterPro" id="IPR009080">
    <property type="entry name" value="tRNAsynth_Ia_anticodon-bd"/>
</dbReference>
<dbReference type="NCBIfam" id="TIGR00398">
    <property type="entry name" value="metG"/>
    <property type="match status" value="1"/>
</dbReference>
<dbReference type="NCBIfam" id="NF001100">
    <property type="entry name" value="PRK00133.1"/>
    <property type="match status" value="1"/>
</dbReference>
<dbReference type="PANTHER" id="PTHR45765">
    <property type="entry name" value="METHIONINE--TRNA LIGASE"/>
    <property type="match status" value="1"/>
</dbReference>
<dbReference type="PANTHER" id="PTHR45765:SF1">
    <property type="entry name" value="METHIONINE--TRNA LIGASE, CYTOPLASMIC"/>
    <property type="match status" value="1"/>
</dbReference>
<dbReference type="Pfam" id="PF19303">
    <property type="entry name" value="Anticodon_3"/>
    <property type="match status" value="1"/>
</dbReference>
<dbReference type="Pfam" id="PF09334">
    <property type="entry name" value="tRNA-synt_1g"/>
    <property type="match status" value="1"/>
</dbReference>
<dbReference type="Pfam" id="PF01588">
    <property type="entry name" value="tRNA_bind"/>
    <property type="match status" value="1"/>
</dbReference>
<dbReference type="PRINTS" id="PR01041">
    <property type="entry name" value="TRNASYNTHMET"/>
</dbReference>
<dbReference type="SUPFAM" id="SSF47323">
    <property type="entry name" value="Anticodon-binding domain of a subclass of class I aminoacyl-tRNA synthetases"/>
    <property type="match status" value="1"/>
</dbReference>
<dbReference type="SUPFAM" id="SSF57770">
    <property type="entry name" value="Methionyl-tRNA synthetase (MetRS), Zn-domain"/>
    <property type="match status" value="1"/>
</dbReference>
<dbReference type="SUPFAM" id="SSF50249">
    <property type="entry name" value="Nucleic acid-binding proteins"/>
    <property type="match status" value="1"/>
</dbReference>
<dbReference type="SUPFAM" id="SSF52374">
    <property type="entry name" value="Nucleotidylyl transferase"/>
    <property type="match status" value="1"/>
</dbReference>
<dbReference type="PROSITE" id="PS00178">
    <property type="entry name" value="AA_TRNA_LIGASE_I"/>
    <property type="match status" value="1"/>
</dbReference>
<dbReference type="PROSITE" id="PS50886">
    <property type="entry name" value="TRBD"/>
    <property type="match status" value="1"/>
</dbReference>
<comment type="function">
    <text evidence="1">Is required not only for elongation of protein synthesis but also for the initiation of all mRNA translation through initiator tRNA(fMet) aminoacylation.</text>
</comment>
<comment type="catalytic activity">
    <reaction evidence="1">
        <text>tRNA(Met) + L-methionine + ATP = L-methionyl-tRNA(Met) + AMP + diphosphate</text>
        <dbReference type="Rhea" id="RHEA:13481"/>
        <dbReference type="Rhea" id="RHEA-COMP:9667"/>
        <dbReference type="Rhea" id="RHEA-COMP:9698"/>
        <dbReference type="ChEBI" id="CHEBI:30616"/>
        <dbReference type="ChEBI" id="CHEBI:33019"/>
        <dbReference type="ChEBI" id="CHEBI:57844"/>
        <dbReference type="ChEBI" id="CHEBI:78442"/>
        <dbReference type="ChEBI" id="CHEBI:78530"/>
        <dbReference type="ChEBI" id="CHEBI:456215"/>
        <dbReference type="EC" id="6.1.1.10"/>
    </reaction>
</comment>
<comment type="cofactor">
    <cofactor evidence="1">
        <name>Zn(2+)</name>
        <dbReference type="ChEBI" id="CHEBI:29105"/>
    </cofactor>
    <text evidence="1">Binds 1 zinc ion per subunit.</text>
</comment>
<comment type="subunit">
    <text evidence="1">Homodimer.</text>
</comment>
<comment type="subcellular location">
    <subcellularLocation>
        <location evidence="1">Cytoplasm</location>
    </subcellularLocation>
</comment>
<comment type="similarity">
    <text evidence="1">Belongs to the class-I aminoacyl-tRNA synthetase family. MetG type 1 subfamily.</text>
</comment>